<evidence type="ECO:0000255" key="1">
    <source>
        <dbReference type="PROSITE-ProRule" id="PRU00541"/>
    </source>
</evidence>
<evidence type="ECO:0000255" key="2">
    <source>
        <dbReference type="PROSITE-ProRule" id="PRU00542"/>
    </source>
</evidence>
<evidence type="ECO:0000256" key="3">
    <source>
        <dbReference type="SAM" id="MobiDB-lite"/>
    </source>
</evidence>
<evidence type="ECO:0000269" key="4">
    <source>
    </source>
</evidence>
<evidence type="ECO:0000305" key="5"/>
<evidence type="ECO:0000305" key="6">
    <source>
    </source>
</evidence>
<dbReference type="EC" id="3.6.4.13"/>
<dbReference type="EMBL" id="AB022215">
    <property type="protein sequence ID" value="BAB01770.1"/>
    <property type="molecule type" value="Genomic_DNA"/>
</dbReference>
<dbReference type="EMBL" id="CP002686">
    <property type="protein sequence ID" value="AEE76622.1"/>
    <property type="molecule type" value="Genomic_DNA"/>
</dbReference>
<dbReference type="EMBL" id="AY062502">
    <property type="protein sequence ID" value="AAL32580.1"/>
    <property type="molecule type" value="mRNA"/>
</dbReference>
<dbReference type="EMBL" id="AY093256">
    <property type="protein sequence ID" value="AAM13255.1"/>
    <property type="molecule type" value="mRNA"/>
</dbReference>
<dbReference type="SMR" id="Q9LUW5"/>
<dbReference type="FunCoup" id="Q9LUW5">
    <property type="interactions" value="574"/>
</dbReference>
<dbReference type="STRING" id="3702.Q9LUW5"/>
<dbReference type="iPTMnet" id="Q9LUW5"/>
<dbReference type="PaxDb" id="3702-AT3G22330.1"/>
<dbReference type="ProteomicsDB" id="237001"/>
<dbReference type="EnsemblPlants" id="AT3G22330.1">
    <property type="protein sequence ID" value="AT3G22330.1"/>
    <property type="gene ID" value="AT3G22330"/>
</dbReference>
<dbReference type="Gramene" id="AT3G22330.1">
    <property type="protein sequence ID" value="AT3G22330.1"/>
    <property type="gene ID" value="AT3G22330"/>
</dbReference>
<dbReference type="KEGG" id="ath:AT3G22330"/>
<dbReference type="Araport" id="AT3G22330"/>
<dbReference type="TAIR" id="AT3G22330">
    <property type="gene designation" value="PMH2"/>
</dbReference>
<dbReference type="eggNOG" id="KOG0331">
    <property type="taxonomic scope" value="Eukaryota"/>
</dbReference>
<dbReference type="HOGENOM" id="CLU_003041_29_1_1"/>
<dbReference type="InParanoid" id="Q9LUW5"/>
<dbReference type="OMA" id="GLDTICV"/>
<dbReference type="OrthoDB" id="4255at2759"/>
<dbReference type="PhylomeDB" id="Q9LUW5"/>
<dbReference type="CD-CODE" id="4299E36E">
    <property type="entry name" value="Nucleolus"/>
</dbReference>
<dbReference type="PRO" id="PR:Q9LUW5"/>
<dbReference type="Proteomes" id="UP000006548">
    <property type="component" value="Chromosome 3"/>
</dbReference>
<dbReference type="ExpressionAtlas" id="Q9LUW5">
    <property type="expression patterns" value="baseline and differential"/>
</dbReference>
<dbReference type="GO" id="GO:0005829">
    <property type="term" value="C:cytosol"/>
    <property type="evidence" value="ECO:0007005"/>
    <property type="project" value="TAIR"/>
</dbReference>
<dbReference type="GO" id="GO:0005739">
    <property type="term" value="C:mitochondrion"/>
    <property type="evidence" value="ECO:0007005"/>
    <property type="project" value="TAIR"/>
</dbReference>
<dbReference type="GO" id="GO:0005730">
    <property type="term" value="C:nucleolus"/>
    <property type="evidence" value="ECO:0007005"/>
    <property type="project" value="TAIR"/>
</dbReference>
<dbReference type="GO" id="GO:0009505">
    <property type="term" value="C:plant-type cell wall"/>
    <property type="evidence" value="ECO:0007005"/>
    <property type="project" value="TAIR"/>
</dbReference>
<dbReference type="GO" id="GO:0032991">
    <property type="term" value="C:protein-containing complex"/>
    <property type="evidence" value="ECO:0000314"/>
    <property type="project" value="TAIR"/>
</dbReference>
<dbReference type="GO" id="GO:0005524">
    <property type="term" value="F:ATP binding"/>
    <property type="evidence" value="ECO:0007669"/>
    <property type="project" value="UniProtKB-KW"/>
</dbReference>
<dbReference type="GO" id="GO:0016887">
    <property type="term" value="F:ATP hydrolysis activity"/>
    <property type="evidence" value="ECO:0007669"/>
    <property type="project" value="RHEA"/>
</dbReference>
<dbReference type="GO" id="GO:0003729">
    <property type="term" value="F:mRNA binding"/>
    <property type="evidence" value="ECO:0000314"/>
    <property type="project" value="TAIR"/>
</dbReference>
<dbReference type="GO" id="GO:0003724">
    <property type="term" value="F:RNA helicase activity"/>
    <property type="evidence" value="ECO:0007669"/>
    <property type="project" value="UniProtKB-EC"/>
</dbReference>
<dbReference type="GO" id="GO:0000373">
    <property type="term" value="P:Group II intron splicing"/>
    <property type="evidence" value="ECO:0000315"/>
    <property type="project" value="TAIR"/>
</dbReference>
<dbReference type="GO" id="GO:0009409">
    <property type="term" value="P:response to cold"/>
    <property type="evidence" value="ECO:0000270"/>
    <property type="project" value="TAIR"/>
</dbReference>
<dbReference type="CDD" id="cd00268">
    <property type="entry name" value="DEADc"/>
    <property type="match status" value="1"/>
</dbReference>
<dbReference type="CDD" id="cd18787">
    <property type="entry name" value="SF2_C_DEAD"/>
    <property type="match status" value="1"/>
</dbReference>
<dbReference type="FunFam" id="3.40.50.300:FF:001060">
    <property type="entry name" value="ATP-dependent RNA helicase RhlE"/>
    <property type="match status" value="1"/>
</dbReference>
<dbReference type="FunFam" id="3.40.50.300:FF:000911">
    <property type="entry name" value="Nucleolar RNA helicase II"/>
    <property type="match status" value="1"/>
</dbReference>
<dbReference type="Gene3D" id="3.40.50.300">
    <property type="entry name" value="P-loop containing nucleotide triphosphate hydrolases"/>
    <property type="match status" value="2"/>
</dbReference>
<dbReference type="InterPro" id="IPR011545">
    <property type="entry name" value="DEAD/DEAH_box_helicase_dom"/>
</dbReference>
<dbReference type="InterPro" id="IPR050079">
    <property type="entry name" value="DEAD_box_RNA_helicase"/>
</dbReference>
<dbReference type="InterPro" id="IPR014001">
    <property type="entry name" value="Helicase_ATP-bd"/>
</dbReference>
<dbReference type="InterPro" id="IPR001650">
    <property type="entry name" value="Helicase_C-like"/>
</dbReference>
<dbReference type="InterPro" id="IPR027417">
    <property type="entry name" value="P-loop_NTPase"/>
</dbReference>
<dbReference type="InterPro" id="IPR014014">
    <property type="entry name" value="RNA_helicase_DEAD_Q_motif"/>
</dbReference>
<dbReference type="PANTHER" id="PTHR47959">
    <property type="entry name" value="ATP-DEPENDENT RNA HELICASE RHLE-RELATED"/>
    <property type="match status" value="1"/>
</dbReference>
<dbReference type="PANTHER" id="PTHR47959:SF23">
    <property type="entry name" value="HELICASE ATP-BINDING DOMAIN-CONTAINING PROTEIN"/>
    <property type="match status" value="1"/>
</dbReference>
<dbReference type="Pfam" id="PF00270">
    <property type="entry name" value="DEAD"/>
    <property type="match status" value="1"/>
</dbReference>
<dbReference type="Pfam" id="PF00271">
    <property type="entry name" value="Helicase_C"/>
    <property type="match status" value="1"/>
</dbReference>
<dbReference type="SMART" id="SM00487">
    <property type="entry name" value="DEXDc"/>
    <property type="match status" value="1"/>
</dbReference>
<dbReference type="SMART" id="SM00490">
    <property type="entry name" value="HELICc"/>
    <property type="match status" value="1"/>
</dbReference>
<dbReference type="SUPFAM" id="SSF52540">
    <property type="entry name" value="P-loop containing nucleoside triphosphate hydrolases"/>
    <property type="match status" value="1"/>
</dbReference>
<dbReference type="PROSITE" id="PS51192">
    <property type="entry name" value="HELICASE_ATP_BIND_1"/>
    <property type="match status" value="1"/>
</dbReference>
<dbReference type="PROSITE" id="PS51194">
    <property type="entry name" value="HELICASE_CTER"/>
    <property type="match status" value="1"/>
</dbReference>
<dbReference type="PROSITE" id="PS51195">
    <property type="entry name" value="Q_MOTIF"/>
    <property type="match status" value="1"/>
</dbReference>
<keyword id="KW-0067">ATP-binding</keyword>
<keyword id="KW-0347">Helicase</keyword>
<keyword id="KW-0378">Hydrolase</keyword>
<keyword id="KW-0496">Mitochondrion</keyword>
<keyword id="KW-0547">Nucleotide-binding</keyword>
<keyword id="KW-1185">Reference proteome</keyword>
<keyword id="KW-0694">RNA-binding</keyword>
<keyword id="KW-0809">Transit peptide</keyword>
<feature type="transit peptide" description="Mitochondrion" evidence="4">
    <location>
        <begin position="1"/>
        <end position="81"/>
    </location>
</feature>
<feature type="chain" id="PRO_0000239193" description="DEAD-box ATP-dependent RNA helicase 53, mitochondrial">
    <location>
        <begin position="82"/>
        <end position="616"/>
    </location>
</feature>
<feature type="domain" description="Helicase ATP-binding" evidence="1">
    <location>
        <begin position="135"/>
        <end position="309"/>
    </location>
</feature>
<feature type="domain" description="Helicase C-terminal" evidence="2">
    <location>
        <begin position="338"/>
        <end position="482"/>
    </location>
</feature>
<feature type="region of interest" description="Disordered" evidence="3">
    <location>
        <begin position="489"/>
        <end position="616"/>
    </location>
</feature>
<feature type="short sequence motif" description="Q motif">
    <location>
        <begin position="104"/>
        <end position="132"/>
    </location>
</feature>
<feature type="short sequence motif" description="DEAD box">
    <location>
        <begin position="257"/>
        <end position="260"/>
    </location>
</feature>
<feature type="compositionally biased region" description="Gly residues" evidence="3">
    <location>
        <begin position="492"/>
        <end position="501"/>
    </location>
</feature>
<feature type="compositionally biased region" description="Gly residues" evidence="3">
    <location>
        <begin position="508"/>
        <end position="531"/>
    </location>
</feature>
<feature type="compositionally biased region" description="Low complexity" evidence="3">
    <location>
        <begin position="532"/>
        <end position="568"/>
    </location>
</feature>
<feature type="compositionally biased region" description="Low complexity" evidence="3">
    <location>
        <begin position="578"/>
        <end position="587"/>
    </location>
</feature>
<feature type="binding site" evidence="1">
    <location>
        <begin position="148"/>
        <end position="155"/>
    </location>
    <ligand>
        <name>ATP</name>
        <dbReference type="ChEBI" id="CHEBI:30616"/>
    </ligand>
</feature>
<accession>Q9LUW5</accession>
<name>RH53_ARATH</name>
<sequence>MITTVLRRSLLDASKRNLSASLTSINTVLFHNLAPAATRVSDLALIGSSDVKAGFPFGVEAKGIHFQSGPLDFRASMVSQAGFAISESSERRVGDSESVGGDGLAISELGISPEIVKALSSKGIEKLFPIQKAVLEPAMEGRDMIGRARTGTGKTLAFGIPIIDKIIKYNAKHGRGRNPLCLVLAPTRELARQVEKEFRESAPSLDTICLYGGTPIGQQMRQLDYGVDVAVGTPGRVIDLMKRGALNLSEVQFVVLDEADQMLQVGFAEDVEIILEKLPEKRQSMMFSATMPSWIRSLTKKYLNNPLTVDLVGDSDQKLADGITTYSIIADSYGRASIIGPLVTEHAKGGKCIVFTQTKRDADRLSYALARSFKCEALHGDISQSQRERTLAGFRDGHFNILVATDVAARGLDVPNVDLIIHYELPNNTETFVHRTGRTGRAGKKGSAILIYSQDQSRAVKIIEREVGSRFTELPSIAVERGSASMFEGIGSRSGGSFGGGMRDRGSSFGGRSGGGGYGGSSGGYGGGRSGGSSNRYSGDSDRSGFGSFGMRSPEGYGSDRSSQSGGRSSFGGGRSGGSSNNRSSGFGDFGSDRSSQSGGRSSFGGFGSNDGKRSY</sequence>
<proteinExistence type="evidence at protein level"/>
<gene>
    <name type="primary">RH53</name>
    <name type="ordered locus">At3g22330</name>
    <name type="ORF">MCB17.5</name>
</gene>
<comment type="catalytic activity">
    <reaction>
        <text>ATP + H2O = ADP + phosphate + H(+)</text>
        <dbReference type="Rhea" id="RHEA:13065"/>
        <dbReference type="ChEBI" id="CHEBI:15377"/>
        <dbReference type="ChEBI" id="CHEBI:15378"/>
        <dbReference type="ChEBI" id="CHEBI:30616"/>
        <dbReference type="ChEBI" id="CHEBI:43474"/>
        <dbReference type="ChEBI" id="CHEBI:456216"/>
        <dbReference type="EC" id="3.6.4.13"/>
    </reaction>
</comment>
<comment type="subcellular location">
    <subcellularLocation>
        <location evidence="6">Mitochondrion</location>
    </subcellularLocation>
</comment>
<comment type="domain">
    <text>The Q motif is unique to and characteristic of the DEAD box family of RNA helicases and controls ATP binding and hydrolysis.</text>
</comment>
<comment type="similarity">
    <text evidence="5">Belongs to the DEAD box helicase family. DDX21/DDX50 subfamily.</text>
</comment>
<reference key="1">
    <citation type="journal article" date="2000" name="DNA Res.">
        <title>Structural analysis of Arabidopsis thaliana chromosome 3. I. Sequence features of the regions of 4,504,864 bp covered by sixty P1 and TAC clones.</title>
        <authorList>
            <person name="Sato S."/>
            <person name="Nakamura Y."/>
            <person name="Kaneko T."/>
            <person name="Katoh T."/>
            <person name="Asamizu E."/>
            <person name="Tabata S."/>
        </authorList>
    </citation>
    <scope>NUCLEOTIDE SEQUENCE [LARGE SCALE GENOMIC DNA]</scope>
    <source>
        <strain>cv. Columbia</strain>
    </source>
</reference>
<reference key="2">
    <citation type="journal article" date="2017" name="Plant J.">
        <title>Araport11: a complete reannotation of the Arabidopsis thaliana reference genome.</title>
        <authorList>
            <person name="Cheng C.Y."/>
            <person name="Krishnakumar V."/>
            <person name="Chan A.P."/>
            <person name="Thibaud-Nissen F."/>
            <person name="Schobel S."/>
            <person name="Town C.D."/>
        </authorList>
    </citation>
    <scope>GENOME REANNOTATION</scope>
    <source>
        <strain>cv. Columbia</strain>
    </source>
</reference>
<reference key="3">
    <citation type="journal article" date="2003" name="Science">
        <title>Empirical analysis of transcriptional activity in the Arabidopsis genome.</title>
        <authorList>
            <person name="Yamada K."/>
            <person name="Lim J."/>
            <person name="Dale J.M."/>
            <person name="Chen H."/>
            <person name="Shinn P."/>
            <person name="Palm C.J."/>
            <person name="Southwick A.M."/>
            <person name="Wu H.C."/>
            <person name="Kim C.J."/>
            <person name="Nguyen M."/>
            <person name="Pham P.K."/>
            <person name="Cheuk R.F."/>
            <person name="Karlin-Newmann G."/>
            <person name="Liu S.X."/>
            <person name="Lam B."/>
            <person name="Sakano H."/>
            <person name="Wu T."/>
            <person name="Yu G."/>
            <person name="Miranda M."/>
            <person name="Quach H.L."/>
            <person name="Tripp M."/>
            <person name="Chang C.H."/>
            <person name="Lee J.M."/>
            <person name="Toriumi M.J."/>
            <person name="Chan M.M."/>
            <person name="Tang C.C."/>
            <person name="Onodera C.S."/>
            <person name="Deng J.M."/>
            <person name="Akiyama K."/>
            <person name="Ansari Y."/>
            <person name="Arakawa T."/>
            <person name="Banh J."/>
            <person name="Banno F."/>
            <person name="Bowser L."/>
            <person name="Brooks S.Y."/>
            <person name="Carninci P."/>
            <person name="Chao Q."/>
            <person name="Choy N."/>
            <person name="Enju A."/>
            <person name="Goldsmith A.D."/>
            <person name="Gurjal M."/>
            <person name="Hansen N.F."/>
            <person name="Hayashizaki Y."/>
            <person name="Johnson-Hopson C."/>
            <person name="Hsuan V.W."/>
            <person name="Iida K."/>
            <person name="Karnes M."/>
            <person name="Khan S."/>
            <person name="Koesema E."/>
            <person name="Ishida J."/>
            <person name="Jiang P.X."/>
            <person name="Jones T."/>
            <person name="Kawai J."/>
            <person name="Kamiya A."/>
            <person name="Meyers C."/>
            <person name="Nakajima M."/>
            <person name="Narusaka M."/>
            <person name="Seki M."/>
            <person name="Sakurai T."/>
            <person name="Satou M."/>
            <person name="Tamse R."/>
            <person name="Vaysberg M."/>
            <person name="Wallender E.K."/>
            <person name="Wong C."/>
            <person name="Yamamura Y."/>
            <person name="Yuan S."/>
            <person name="Shinozaki K."/>
            <person name="Davis R.W."/>
            <person name="Theologis A."/>
            <person name="Ecker J.R."/>
        </authorList>
    </citation>
    <scope>NUCLEOTIDE SEQUENCE [LARGE SCALE MRNA]</scope>
    <source>
        <strain>cv. Columbia</strain>
    </source>
</reference>
<reference key="4">
    <citation type="journal article" date="2004" name="Plant Biotechnol. J.">
        <title>DEAD-box RNA helicases in Arabidopsis thaliana: establishing a link between quantitative expression, gene structure and evolution of a family of genes.</title>
        <authorList>
            <person name="Mingam A."/>
            <person name="Toffano-Nioche C."/>
            <person name="Brunaud V."/>
            <person name="Boudet N."/>
            <person name="Kreis M."/>
            <person name="Lecharny A."/>
        </authorList>
    </citation>
    <scope>GENE FAMILY</scope>
    <scope>NOMENCLATURE</scope>
</reference>
<reference key="5">
    <citation type="journal article" date="2013" name="PLoS ONE">
        <title>Genome-wide comparative in silico analysis of the RNA helicase gene family in Zea mays and Glycine max: a comparison with Arabidopsis and Oryza sativa.</title>
        <authorList>
            <person name="Xu R."/>
            <person name="Zhang S."/>
            <person name="Huang J."/>
            <person name="Zheng C."/>
        </authorList>
    </citation>
    <scope>GENE FAMILY</scope>
</reference>
<reference key="6">
    <citation type="journal article" date="2015" name="J. Exp. Bot.">
        <title>Identification of cleavage sites and substrate proteins for two mitochondrial intermediate peptidases in Arabidopsis thaliana.</title>
        <authorList>
            <person name="Carrie C."/>
            <person name="Venne A.S."/>
            <person name="Zahedi R.P."/>
            <person name="Soll J."/>
        </authorList>
    </citation>
    <scope>IDENTIFICATION BY MASS SPECTROMETRY</scope>
    <scope>CLEAVAGE OF TRANSIT PEPTIDE AFTER ALA-81</scope>
</reference>
<protein>
    <recommendedName>
        <fullName>DEAD-box ATP-dependent RNA helicase 53, mitochondrial</fullName>
        <ecNumber>3.6.4.13</ecNumber>
    </recommendedName>
</protein>
<organism>
    <name type="scientific">Arabidopsis thaliana</name>
    <name type="common">Mouse-ear cress</name>
    <dbReference type="NCBI Taxonomy" id="3702"/>
    <lineage>
        <taxon>Eukaryota</taxon>
        <taxon>Viridiplantae</taxon>
        <taxon>Streptophyta</taxon>
        <taxon>Embryophyta</taxon>
        <taxon>Tracheophyta</taxon>
        <taxon>Spermatophyta</taxon>
        <taxon>Magnoliopsida</taxon>
        <taxon>eudicotyledons</taxon>
        <taxon>Gunneridae</taxon>
        <taxon>Pentapetalae</taxon>
        <taxon>rosids</taxon>
        <taxon>malvids</taxon>
        <taxon>Brassicales</taxon>
        <taxon>Brassicaceae</taxon>
        <taxon>Camelineae</taxon>
        <taxon>Arabidopsis</taxon>
    </lineage>
</organism>